<proteinExistence type="evidence at transcript level"/>
<reference key="1">
    <citation type="journal article" date="1988" name="Plant Mol. Biol.">
        <title>Proteins homologous to leaf glycoproteins are abundant in stems of darkgrown soybean seedlings. Analysis of proteins and cDNAs.</title>
        <authorList>
            <person name="Mason H.S."/>
            <person name="Guerrero F.D."/>
            <person name="Boyer J.S."/>
            <person name="Mullet J.E."/>
        </authorList>
        <dbReference type="AGRICOLA" id="IND91035200"/>
    </citation>
    <scope>NUCLEOTIDE SEQUENCE</scope>
    <source>
        <strain>cv. Williams 82</strain>
    </source>
</reference>
<reference key="2">
    <citation type="journal article" date="1988" name="Plant Physiol.">
        <title>Soybean vegetative storage protein structure and gene expression.</title>
        <authorList>
            <person name="Staswick P.E."/>
        </authorList>
    </citation>
    <scope>NUCLEOTIDE SEQUENCE</scope>
    <source>
        <tissue>Leaf</tissue>
    </source>
</reference>
<reference key="3">
    <citation type="submission" date="1991-09" db="EMBL/GenBank/DDBJ databases">
        <authorList>
            <person name="Rhee Y."/>
            <person name="Staswick P.E."/>
        </authorList>
    </citation>
    <scope>NUCLEOTIDE SEQUENCE</scope>
</reference>
<accession>P10743</accession>
<accession>Q39823</accession>
<evidence type="ECO:0000255" key="1"/>
<evidence type="ECO:0000305" key="2"/>
<comment type="function">
    <text>May function as somatic storage protein during early seedling development.</text>
</comment>
<comment type="tissue specificity">
    <text>Accumulates in the stems of developing soybean seedlings.</text>
</comment>
<comment type="similarity">
    <text evidence="2">Belongs to the APS1/VSP family.</text>
</comment>
<gene>
    <name type="primary">VSPB</name>
    <name type="synonym">VSP27</name>
</gene>
<protein>
    <recommendedName>
        <fullName>Stem 31 kDa glycoprotein</fullName>
    </recommendedName>
    <alternativeName>
        <fullName>Vegetative storage protein B</fullName>
    </alternativeName>
</protein>
<sequence length="254" mass="29280">MKLFVFFVAAVVLVAWPCHGAGYQRFPLRMKTGYGERSSEVKCASFRLAVEAHNIRAFKTIPEECVEPTKDYINGEQFRSDSKTVNQQAFFYASEREVHHNDIFIFGIDNTVLSNIPYYEKHGYGVEEFNETLYDEWVNKGDAPALPETLKNYNKLLSLGFKIVFLSGRYLDKMAVTEANLKKAGFHTWEQLILKDPHLITPNALSYKSAMRENLLRQGYRIVGIIGDQWSDLLGDHRGESRTFKLPNPMYYIE</sequence>
<dbReference type="EMBL" id="M37529">
    <property type="protein sequence ID" value="AAA33938.1"/>
    <property type="status" value="ALT_SEQ"/>
    <property type="molecule type" value="mRNA"/>
</dbReference>
<dbReference type="EMBL" id="M20038">
    <property type="protein sequence ID" value="AAA34021.1"/>
    <property type="molecule type" value="mRNA"/>
</dbReference>
<dbReference type="EMBL" id="M76980">
    <property type="protein sequence ID" value="AAA34022.1"/>
    <property type="molecule type" value="Genomic_DNA"/>
</dbReference>
<dbReference type="PIR" id="JN0697">
    <property type="entry name" value="UESY27"/>
</dbReference>
<dbReference type="PIR" id="T06441">
    <property type="entry name" value="T06441"/>
</dbReference>
<dbReference type="RefSeq" id="NP_001241536.1">
    <property type="nucleotide sequence ID" value="NM_001254607.1"/>
</dbReference>
<dbReference type="SMR" id="P10743"/>
<dbReference type="STRING" id="3847.P10743"/>
<dbReference type="GlyCosmos" id="P10743">
    <property type="glycosylation" value="1 site, No reported glycans"/>
</dbReference>
<dbReference type="PaxDb" id="3847-GLYMA08G21410.1"/>
<dbReference type="EnsemblPlants" id="KRH44262">
    <property type="protein sequence ID" value="KRH44262"/>
    <property type="gene ID" value="GLYMA_08G200100"/>
</dbReference>
<dbReference type="GeneID" id="547820"/>
<dbReference type="Gramene" id="KRH44262">
    <property type="protein sequence ID" value="KRH44262"/>
    <property type="gene ID" value="GLYMA_08G200100"/>
</dbReference>
<dbReference type="KEGG" id="gmx:547820"/>
<dbReference type="eggNOG" id="ENOG502QU6T">
    <property type="taxonomic scope" value="Eukaryota"/>
</dbReference>
<dbReference type="HOGENOM" id="CLU_053338_1_1_1"/>
<dbReference type="InParanoid" id="P10743"/>
<dbReference type="OMA" id="CVAYIAN"/>
<dbReference type="OrthoDB" id="1363232at2759"/>
<dbReference type="Proteomes" id="UP000008827">
    <property type="component" value="Chromosome 8"/>
</dbReference>
<dbReference type="GO" id="GO:0045735">
    <property type="term" value="F:nutrient reservoir activity"/>
    <property type="evidence" value="ECO:0007669"/>
    <property type="project" value="UniProtKB-KW"/>
</dbReference>
<dbReference type="CDD" id="cd07535">
    <property type="entry name" value="HAD_VSP"/>
    <property type="match status" value="1"/>
</dbReference>
<dbReference type="Gene3D" id="3.40.50.1000">
    <property type="entry name" value="HAD superfamily/HAD-like"/>
    <property type="match status" value="1"/>
</dbReference>
<dbReference type="InterPro" id="IPR005519">
    <property type="entry name" value="Acid_phosphat_B-like"/>
</dbReference>
<dbReference type="InterPro" id="IPR014403">
    <property type="entry name" value="APS1/VSP"/>
</dbReference>
<dbReference type="InterPro" id="IPR036412">
    <property type="entry name" value="HAD-like_sf"/>
</dbReference>
<dbReference type="InterPro" id="IPR023214">
    <property type="entry name" value="HAD_sf"/>
</dbReference>
<dbReference type="InterPro" id="IPR011267">
    <property type="entry name" value="Veg_Stor_Prot"/>
</dbReference>
<dbReference type="NCBIfam" id="TIGR01680">
    <property type="entry name" value="Veg_Stor_Prot"/>
    <property type="match status" value="1"/>
</dbReference>
<dbReference type="PANTHER" id="PTHR31284">
    <property type="entry name" value="ACID PHOSPHATASE-LIKE PROTEIN"/>
    <property type="match status" value="1"/>
</dbReference>
<dbReference type="PANTHER" id="PTHR31284:SF19">
    <property type="entry name" value="VEGETATIVE STORAGE PROTEIN 1-RELATED"/>
    <property type="match status" value="1"/>
</dbReference>
<dbReference type="Pfam" id="PF03767">
    <property type="entry name" value="Acid_phosphat_B"/>
    <property type="match status" value="1"/>
</dbReference>
<dbReference type="PIRSF" id="PIRSF002674">
    <property type="entry name" value="VSP"/>
    <property type="match status" value="1"/>
</dbReference>
<dbReference type="SUPFAM" id="SSF56784">
    <property type="entry name" value="HAD-like"/>
    <property type="match status" value="1"/>
</dbReference>
<feature type="signal peptide" evidence="1">
    <location>
        <begin position="1"/>
        <end position="20"/>
    </location>
</feature>
<feature type="propeptide" id="PRO_0000023991">
    <location>
        <begin position="21"/>
        <end position="35"/>
    </location>
</feature>
<feature type="chain" id="PRO_0000023992" description="Stem 31 kDa glycoprotein">
    <location>
        <begin position="36"/>
        <end position="254"/>
    </location>
</feature>
<feature type="glycosylation site" description="N-linked (GlcNAc...) asparagine" evidence="1">
    <location>
        <position position="130"/>
    </location>
</feature>
<name>VSPB_SOYBN</name>
<organism>
    <name type="scientific">Glycine max</name>
    <name type="common">Soybean</name>
    <name type="synonym">Glycine hispida</name>
    <dbReference type="NCBI Taxonomy" id="3847"/>
    <lineage>
        <taxon>Eukaryota</taxon>
        <taxon>Viridiplantae</taxon>
        <taxon>Streptophyta</taxon>
        <taxon>Embryophyta</taxon>
        <taxon>Tracheophyta</taxon>
        <taxon>Spermatophyta</taxon>
        <taxon>Magnoliopsida</taxon>
        <taxon>eudicotyledons</taxon>
        <taxon>Gunneridae</taxon>
        <taxon>Pentapetalae</taxon>
        <taxon>rosids</taxon>
        <taxon>fabids</taxon>
        <taxon>Fabales</taxon>
        <taxon>Fabaceae</taxon>
        <taxon>Papilionoideae</taxon>
        <taxon>50 kb inversion clade</taxon>
        <taxon>NPAAA clade</taxon>
        <taxon>indigoferoid/millettioid clade</taxon>
        <taxon>Phaseoleae</taxon>
        <taxon>Glycine</taxon>
        <taxon>Glycine subgen. Soja</taxon>
    </lineage>
</organism>
<keyword id="KW-0325">Glycoprotein</keyword>
<keyword id="KW-1185">Reference proteome</keyword>
<keyword id="KW-0708">Seed storage protein</keyword>
<keyword id="KW-0732">Signal</keyword>
<keyword id="KW-0758">Storage protein</keyword>